<feature type="chain" id="PRO_0000200558" description="Thiosulfate sulfurtransferase GlpE">
    <location>
        <begin position="1"/>
        <end position="110"/>
    </location>
</feature>
<feature type="domain" description="Rhodanese" evidence="1">
    <location>
        <begin position="19"/>
        <end position="107"/>
    </location>
</feature>
<feature type="active site" description="Cysteine persulfide intermediate" evidence="1">
    <location>
        <position position="67"/>
    </location>
</feature>
<dbReference type="EC" id="2.8.1.1" evidence="1"/>
<dbReference type="EMBL" id="CR378663">
    <property type="protein sequence ID" value="CAG18595.1"/>
    <property type="molecule type" value="Genomic_DNA"/>
</dbReference>
<dbReference type="RefSeq" id="WP_011216973.1">
    <property type="nucleotide sequence ID" value="NC_006370.1"/>
</dbReference>
<dbReference type="SMR" id="Q6LVT0"/>
<dbReference type="STRING" id="298386.PBPRA0156"/>
<dbReference type="KEGG" id="ppr:PBPRA0156"/>
<dbReference type="eggNOG" id="COG0607">
    <property type="taxonomic scope" value="Bacteria"/>
</dbReference>
<dbReference type="HOGENOM" id="CLU_089574_14_0_6"/>
<dbReference type="Proteomes" id="UP000000593">
    <property type="component" value="Chromosome 1"/>
</dbReference>
<dbReference type="GO" id="GO:0005737">
    <property type="term" value="C:cytoplasm"/>
    <property type="evidence" value="ECO:0007669"/>
    <property type="project" value="UniProtKB-SubCell"/>
</dbReference>
<dbReference type="GO" id="GO:0004792">
    <property type="term" value="F:thiosulfate-cyanide sulfurtransferase activity"/>
    <property type="evidence" value="ECO:0007669"/>
    <property type="project" value="UniProtKB-UniRule"/>
</dbReference>
<dbReference type="GO" id="GO:0006071">
    <property type="term" value="P:glycerol metabolic process"/>
    <property type="evidence" value="ECO:0007669"/>
    <property type="project" value="UniProtKB-UniRule"/>
</dbReference>
<dbReference type="CDD" id="cd01444">
    <property type="entry name" value="GlpE_ST"/>
    <property type="match status" value="1"/>
</dbReference>
<dbReference type="Gene3D" id="3.40.250.10">
    <property type="entry name" value="Rhodanese-like domain"/>
    <property type="match status" value="1"/>
</dbReference>
<dbReference type="HAMAP" id="MF_01009">
    <property type="entry name" value="Thiosulf_sulfurtr"/>
    <property type="match status" value="1"/>
</dbReference>
<dbReference type="InterPro" id="IPR050229">
    <property type="entry name" value="GlpE_sulfurtransferase"/>
</dbReference>
<dbReference type="InterPro" id="IPR001763">
    <property type="entry name" value="Rhodanese-like_dom"/>
</dbReference>
<dbReference type="InterPro" id="IPR036873">
    <property type="entry name" value="Rhodanese-like_dom_sf"/>
</dbReference>
<dbReference type="InterPro" id="IPR023695">
    <property type="entry name" value="Thiosulf_sulfurTrfase"/>
</dbReference>
<dbReference type="NCBIfam" id="NF001195">
    <property type="entry name" value="PRK00162.1"/>
    <property type="match status" value="1"/>
</dbReference>
<dbReference type="PANTHER" id="PTHR43031">
    <property type="entry name" value="FAD-DEPENDENT OXIDOREDUCTASE"/>
    <property type="match status" value="1"/>
</dbReference>
<dbReference type="PANTHER" id="PTHR43031:SF6">
    <property type="entry name" value="THIOSULFATE SULFURTRANSFERASE GLPE"/>
    <property type="match status" value="1"/>
</dbReference>
<dbReference type="Pfam" id="PF00581">
    <property type="entry name" value="Rhodanese"/>
    <property type="match status" value="1"/>
</dbReference>
<dbReference type="SMART" id="SM00450">
    <property type="entry name" value="RHOD"/>
    <property type="match status" value="1"/>
</dbReference>
<dbReference type="SUPFAM" id="SSF52821">
    <property type="entry name" value="Rhodanese/Cell cycle control phosphatase"/>
    <property type="match status" value="1"/>
</dbReference>
<dbReference type="PROSITE" id="PS50206">
    <property type="entry name" value="RHODANESE_3"/>
    <property type="match status" value="1"/>
</dbReference>
<gene>
    <name evidence="1" type="primary">glpE</name>
    <name type="ordered locus">PBPRA0156</name>
</gene>
<keyword id="KW-0963">Cytoplasm</keyword>
<keyword id="KW-1185">Reference proteome</keyword>
<keyword id="KW-0808">Transferase</keyword>
<comment type="function">
    <text evidence="1">Transferase that catalyzes the transfer of sulfur from thiosulfate to thiophilic acceptors such as cyanide or dithiols. May function in a CysM-independent thiosulfate assimilation pathway by catalyzing the conversion of thiosulfate to sulfite, which can then be used for L-cysteine biosynthesis.</text>
</comment>
<comment type="catalytic activity">
    <reaction evidence="1">
        <text>thiosulfate + hydrogen cyanide = thiocyanate + sulfite + 2 H(+)</text>
        <dbReference type="Rhea" id="RHEA:16881"/>
        <dbReference type="ChEBI" id="CHEBI:15378"/>
        <dbReference type="ChEBI" id="CHEBI:17359"/>
        <dbReference type="ChEBI" id="CHEBI:18022"/>
        <dbReference type="ChEBI" id="CHEBI:18407"/>
        <dbReference type="ChEBI" id="CHEBI:33542"/>
        <dbReference type="EC" id="2.8.1.1"/>
    </reaction>
</comment>
<comment type="catalytic activity">
    <reaction evidence="1">
        <text>thiosulfate + [thioredoxin]-dithiol = [thioredoxin]-disulfide + hydrogen sulfide + sulfite + 2 H(+)</text>
        <dbReference type="Rhea" id="RHEA:83859"/>
        <dbReference type="Rhea" id="RHEA-COMP:10698"/>
        <dbReference type="Rhea" id="RHEA-COMP:10700"/>
        <dbReference type="ChEBI" id="CHEBI:15378"/>
        <dbReference type="ChEBI" id="CHEBI:17359"/>
        <dbReference type="ChEBI" id="CHEBI:29919"/>
        <dbReference type="ChEBI" id="CHEBI:29950"/>
        <dbReference type="ChEBI" id="CHEBI:33542"/>
        <dbReference type="ChEBI" id="CHEBI:50058"/>
    </reaction>
</comment>
<comment type="subcellular location">
    <subcellularLocation>
        <location evidence="1">Cytoplasm</location>
    </subcellularLocation>
</comment>
<comment type="similarity">
    <text evidence="1">Belongs to the GlpE family.</text>
</comment>
<name>GLPE_PHOPR</name>
<accession>Q6LVT0</accession>
<reference key="1">
    <citation type="journal article" date="2005" name="Science">
        <title>Life at depth: Photobacterium profundum genome sequence and expression analysis.</title>
        <authorList>
            <person name="Vezzi A."/>
            <person name="Campanaro S."/>
            <person name="D'Angelo M."/>
            <person name="Simonato F."/>
            <person name="Vitulo N."/>
            <person name="Lauro F.M."/>
            <person name="Cestaro A."/>
            <person name="Malacrida G."/>
            <person name="Simionati B."/>
            <person name="Cannata N."/>
            <person name="Romualdi C."/>
            <person name="Bartlett D.H."/>
            <person name="Valle G."/>
        </authorList>
    </citation>
    <scope>NUCLEOTIDE SEQUENCE [LARGE SCALE GENOMIC DNA]</scope>
    <source>
        <strain>ATCC BAA-1253 / SS9</strain>
    </source>
</reference>
<sequence length="110" mass="12431">MEQFEHISVDQAYSLLQQEDSLAVLVDIRDPQSFGLAHPENAYHLTNDTMVELMNQVDFEQPVIVMCYHGISSQGAAQYLINQGFEAVYSLDGGFEAWRRQALPIIQQIG</sequence>
<proteinExistence type="inferred from homology"/>
<protein>
    <recommendedName>
        <fullName evidence="1">Thiosulfate sulfurtransferase GlpE</fullName>
        <ecNumber evidence="1">2.8.1.1</ecNumber>
    </recommendedName>
</protein>
<evidence type="ECO:0000255" key="1">
    <source>
        <dbReference type="HAMAP-Rule" id="MF_01009"/>
    </source>
</evidence>
<organism>
    <name type="scientific">Photobacterium profundum (strain SS9)</name>
    <dbReference type="NCBI Taxonomy" id="298386"/>
    <lineage>
        <taxon>Bacteria</taxon>
        <taxon>Pseudomonadati</taxon>
        <taxon>Pseudomonadota</taxon>
        <taxon>Gammaproteobacteria</taxon>
        <taxon>Vibrionales</taxon>
        <taxon>Vibrionaceae</taxon>
        <taxon>Photobacterium</taxon>
    </lineage>
</organism>